<keyword id="KW-0238">DNA-binding</keyword>
<keyword id="KW-0539">Nucleus</keyword>
<keyword id="KW-0611">Plant defense</keyword>
<keyword id="KW-1185">Reference proteome</keyword>
<keyword id="KW-0677">Repeat</keyword>
<keyword id="KW-0804">Transcription</keyword>
<keyword id="KW-0805">Transcription regulation</keyword>
<dbReference type="EMBL" id="AC009894">
    <property type="protein sequence ID" value="AAF02833.1"/>
    <property type="molecule type" value="Genomic_DNA"/>
</dbReference>
<dbReference type="EMBL" id="AC069159">
    <property type="protein sequence ID" value="AAG50903.1"/>
    <property type="molecule type" value="Genomic_DNA"/>
</dbReference>
<dbReference type="EMBL" id="CP002684">
    <property type="protein sequence ID" value="AEE33352.1"/>
    <property type="molecule type" value="Genomic_DNA"/>
</dbReference>
<dbReference type="EMBL" id="AF062905">
    <property type="protein sequence ID" value="AAC83627.1"/>
    <property type="molecule type" value="mRNA"/>
</dbReference>
<dbReference type="PIR" id="A96603">
    <property type="entry name" value="A96603"/>
</dbReference>
<dbReference type="PIR" id="T51677">
    <property type="entry name" value="T51677"/>
</dbReference>
<dbReference type="RefSeq" id="NP_176012.1">
    <property type="nucleotide sequence ID" value="NM_104495.1"/>
</dbReference>
<dbReference type="SMR" id="Q9SGU3"/>
<dbReference type="FunCoup" id="Q9SGU3">
    <property type="interactions" value="1"/>
</dbReference>
<dbReference type="IntAct" id="Q9SGU3">
    <property type="interactions" value="4"/>
</dbReference>
<dbReference type="STRING" id="3702.Q9SGU3"/>
<dbReference type="PaxDb" id="3702-AT1G56160.1"/>
<dbReference type="EnsemblPlants" id="AT1G56160.1">
    <property type="protein sequence ID" value="AT1G56160.1"/>
    <property type="gene ID" value="AT1G56160"/>
</dbReference>
<dbReference type="GeneID" id="842069"/>
<dbReference type="Gramene" id="AT1G56160.1">
    <property type="protein sequence ID" value="AT1G56160.1"/>
    <property type="gene ID" value="AT1G56160"/>
</dbReference>
<dbReference type="KEGG" id="ath:AT1G56160"/>
<dbReference type="Araport" id="AT1G56160"/>
<dbReference type="TAIR" id="AT1G56160">
    <property type="gene designation" value="MYB72"/>
</dbReference>
<dbReference type="eggNOG" id="KOG0048">
    <property type="taxonomic scope" value="Eukaryota"/>
</dbReference>
<dbReference type="HOGENOM" id="CLU_028567_25_3_1"/>
<dbReference type="InParanoid" id="Q9SGU3"/>
<dbReference type="OMA" id="ADHDKNC"/>
<dbReference type="OrthoDB" id="2143914at2759"/>
<dbReference type="PhylomeDB" id="Q9SGU3"/>
<dbReference type="PRO" id="PR:Q9SGU3"/>
<dbReference type="Proteomes" id="UP000006548">
    <property type="component" value="Chromosome 1"/>
</dbReference>
<dbReference type="ExpressionAtlas" id="Q9SGU3">
    <property type="expression patterns" value="baseline and differential"/>
</dbReference>
<dbReference type="GO" id="GO:0005634">
    <property type="term" value="C:nucleus"/>
    <property type="evidence" value="ECO:0000314"/>
    <property type="project" value="UniProtKB"/>
</dbReference>
<dbReference type="GO" id="GO:0003677">
    <property type="term" value="F:DNA binding"/>
    <property type="evidence" value="ECO:0007669"/>
    <property type="project" value="UniProtKB-KW"/>
</dbReference>
<dbReference type="GO" id="GO:0003700">
    <property type="term" value="F:DNA-binding transcription factor activity"/>
    <property type="evidence" value="ECO:0000250"/>
    <property type="project" value="TAIR"/>
</dbReference>
<dbReference type="GO" id="GO:0098849">
    <property type="term" value="P:cellular detoxification of cadmium ion"/>
    <property type="evidence" value="ECO:0000315"/>
    <property type="project" value="UniProtKB"/>
</dbReference>
<dbReference type="GO" id="GO:0051365">
    <property type="term" value="P:cellular response to potassium ion starvation"/>
    <property type="evidence" value="ECO:0000270"/>
    <property type="project" value="UniProtKB"/>
</dbReference>
<dbReference type="GO" id="GO:0009866">
    <property type="term" value="P:induced systemic resistance, ethylene mediated signaling pathway"/>
    <property type="evidence" value="ECO:0000315"/>
    <property type="project" value="UniProtKB"/>
</dbReference>
<dbReference type="GO" id="GO:0010468">
    <property type="term" value="P:regulation of gene expression"/>
    <property type="evidence" value="ECO:0000315"/>
    <property type="project" value="UniProtKB"/>
</dbReference>
<dbReference type="GO" id="GO:1990641">
    <property type="term" value="P:response to iron ion starvation"/>
    <property type="evidence" value="ECO:0000315"/>
    <property type="project" value="UniProtKB"/>
</dbReference>
<dbReference type="GO" id="GO:0002237">
    <property type="term" value="P:response to molecule of bacterial origin"/>
    <property type="evidence" value="ECO:0000315"/>
    <property type="project" value="UniProtKB"/>
</dbReference>
<dbReference type="GO" id="GO:0010043">
    <property type="term" value="P:response to zinc ion"/>
    <property type="evidence" value="ECO:0000314"/>
    <property type="project" value="UniProtKB"/>
</dbReference>
<dbReference type="GO" id="GO:0019748">
    <property type="term" value="P:secondary metabolic process"/>
    <property type="evidence" value="ECO:0000315"/>
    <property type="project" value="UniProtKB"/>
</dbReference>
<dbReference type="GO" id="GO:1990532">
    <property type="term" value="P:stress response to nickel ion"/>
    <property type="evidence" value="ECO:0000315"/>
    <property type="project" value="UniProtKB"/>
</dbReference>
<dbReference type="GO" id="GO:1990359">
    <property type="term" value="P:stress response to zinc ion"/>
    <property type="evidence" value="ECO:0000315"/>
    <property type="project" value="UniProtKB"/>
</dbReference>
<dbReference type="CDD" id="cd00167">
    <property type="entry name" value="SANT"/>
    <property type="match status" value="2"/>
</dbReference>
<dbReference type="FunFam" id="1.10.10.60:FF:000310">
    <property type="entry name" value="MYB transcription factor"/>
    <property type="match status" value="1"/>
</dbReference>
<dbReference type="FunFam" id="1.10.10.60:FF:000015">
    <property type="entry name" value="Transcription factor RAX3"/>
    <property type="match status" value="1"/>
</dbReference>
<dbReference type="Gene3D" id="1.10.10.60">
    <property type="entry name" value="Homeodomain-like"/>
    <property type="match status" value="2"/>
</dbReference>
<dbReference type="InterPro" id="IPR009057">
    <property type="entry name" value="Homeodomain-like_sf"/>
</dbReference>
<dbReference type="InterPro" id="IPR017930">
    <property type="entry name" value="Myb_dom"/>
</dbReference>
<dbReference type="InterPro" id="IPR015495">
    <property type="entry name" value="Myb_TF_plants"/>
</dbReference>
<dbReference type="InterPro" id="IPR001005">
    <property type="entry name" value="SANT/Myb"/>
</dbReference>
<dbReference type="PANTHER" id="PTHR10641">
    <property type="entry name" value="MYB FAMILY TRANSCRIPTION FACTOR"/>
    <property type="match status" value="1"/>
</dbReference>
<dbReference type="PANTHER" id="PTHR10641:SF1103">
    <property type="entry name" value="TRANSCRIPTION FACTOR MYB72"/>
    <property type="match status" value="1"/>
</dbReference>
<dbReference type="Pfam" id="PF00249">
    <property type="entry name" value="Myb_DNA-binding"/>
    <property type="match status" value="2"/>
</dbReference>
<dbReference type="SMART" id="SM00717">
    <property type="entry name" value="SANT"/>
    <property type="match status" value="2"/>
</dbReference>
<dbReference type="SUPFAM" id="SSF46689">
    <property type="entry name" value="Homeodomain-like"/>
    <property type="match status" value="1"/>
</dbReference>
<dbReference type="PROSITE" id="PS51294">
    <property type="entry name" value="HTH_MYB"/>
    <property type="match status" value="2"/>
</dbReference>
<gene>
    <name evidence="9" type="primary">MYB72</name>
    <name evidence="11" type="ordered locus">At1g56160</name>
    <name evidence="13" type="ORF">F14G9.22</name>
    <name evidence="12" type="ORF">T6H22.4</name>
</gene>
<comment type="function">
    <text evidence="4 5 6 7 8">Involved in metal ions homeostasis, including iron ions (Fe) acquisition, via the regulation of NAS4 and NAS2 genes expression. Necessary for plant survival in alkaline soil where iron availability is greatly restricted (PubMed:18088336, PubMed:24278034). Involved in the up-regulation of several biosynthesis genes of secondary metabolites involved in iron uptake under conditions of iron deficiency (PubMed:25138267). Triggers tolerance to nickel (Ni) and zinc (Zn) ions (PubMed:24278034). Required in the roots during early signaling steps of rhizobacteria-mediated (e.g. P.fluorescens WCS417r) and beneficial fungi-mediated (e.g. T.asperellum T34) broad-spectrum induced systemic resistance (ISR) against several pathogens (e.g. P.syringae pv tomato, H.parasitica, P.cucumerina, A.brassicicola and B.cinerea) and implying enhanced callose deposition (PubMed:18218967, PubMed:19121118). Required for the induction of some genes (e.g. BGLU42) upon rhizobacteria-mediated ISR (PubMed:25138267).</text>
</comment>
<comment type="subunit">
    <text evidence="5">Interacts with EIL3.</text>
</comment>
<comment type="interaction">
    <interactant intactId="EBI-1789562">
        <id>Q9SGU3</id>
    </interactant>
    <interactant intactId="EBI-3946710">
        <id>Q9M1R4</id>
        <label>IAA30</label>
    </interactant>
    <organismsDiffer>false</organismsDiffer>
    <experiments>3</experiments>
</comment>
<comment type="interaction">
    <interactant intactId="EBI-1789562">
        <id>Q9SGU3</id>
    </interactant>
    <interactant intactId="EBI-4424361">
        <id>Q9SZI2</id>
        <label>NAP1;1</label>
    </interactant>
    <organismsDiffer>false</organismsDiffer>
    <experiments>3</experiments>
</comment>
<comment type="subcellular location">
    <subcellularLocation>
        <location evidence="1 7">Nucleus</location>
    </subcellularLocation>
</comment>
<comment type="induction">
    <text evidence="3 4 5 7">Accumulates strongly in the root stele when exposed to iron (Fe)-deficient conditions (PubMed:24278034). Accumulates upon potassium ion (K) depletion (PubMed:15489280). Induced in roots by zinc (Zn) and cadmium (Cd) ions (PubMed:18088336). Specifically activated in the roots upon colonization by nonpathogenic P.fluorescens WCS417r (PubMed:18218967).</text>
</comment>
<comment type="disruption phenotype">
    <text evidence="4 5 6 7 8">Shorter roots due to increased sensitivity to excess zinc ions (Zn) and iron ions (Fe) deficiency, respectively (PubMed:18088336). Reduced production of root-derived phenolics upon iron ions (Fe) depletion (PubMed:25138267). Plants lacking myb10 and myb72 fail to induce transcript accumulation of the nicotianamine synthase genes NAS4 and NAS2 in iron ions (Fe) deficiency, and exhibits nickel (Ni) and zinc (Zn) sensitivity (PubMed:24278034). Impaired P.fluorescens WCS417r- and T.asperellum T34- mediated broad-spectrum induced systemic resistance (ISR) against the pathogens P.syringae pv tomato, H.parasitica, A.brassicicola, P.cucumerina and B.cinerea and characterized by blocked priming of enhanced callose deposition (PubMed:18218967, PubMed:19121118). Misregulation of several genes (e.g. BGLU42) triggered by P.fluorescens WCS417r upon ISR (PubMed:25138267).</text>
</comment>
<proteinExistence type="evidence at protein level"/>
<name>MYB72_ARATH</name>
<feature type="chain" id="PRO_0000442349" description="Transcription factor MYB72">
    <location>
        <begin position="1"/>
        <end position="296"/>
    </location>
</feature>
<feature type="domain" description="HTH myb-type 1" evidence="1">
    <location>
        <begin position="11"/>
        <end position="63"/>
    </location>
</feature>
<feature type="domain" description="HTH myb-type 2" evidence="1">
    <location>
        <begin position="64"/>
        <end position="118"/>
    </location>
</feature>
<feature type="DNA-binding region" description="H-T-H motif" evidence="1">
    <location>
        <begin position="39"/>
        <end position="63"/>
    </location>
</feature>
<feature type="DNA-binding region" description="H-T-H motif" evidence="1">
    <location>
        <begin position="91"/>
        <end position="114"/>
    </location>
</feature>
<feature type="region of interest" description="Disordered" evidence="2">
    <location>
        <begin position="118"/>
        <end position="144"/>
    </location>
</feature>
<feature type="compositionally biased region" description="Basic and acidic residues" evidence="2">
    <location>
        <begin position="133"/>
        <end position="144"/>
    </location>
</feature>
<feature type="sequence conflict" description="In Ref. 3; AAC83627." evidence="10" ref="3">
    <original>F</original>
    <variation>S</variation>
    <location>
        <position position="202"/>
    </location>
</feature>
<reference key="1">
    <citation type="journal article" date="2000" name="Nature">
        <title>Sequence and analysis of chromosome 1 of the plant Arabidopsis thaliana.</title>
        <authorList>
            <person name="Theologis A."/>
            <person name="Ecker J.R."/>
            <person name="Palm C.J."/>
            <person name="Federspiel N.A."/>
            <person name="Kaul S."/>
            <person name="White O."/>
            <person name="Alonso J."/>
            <person name="Altafi H."/>
            <person name="Araujo R."/>
            <person name="Bowman C.L."/>
            <person name="Brooks S.Y."/>
            <person name="Buehler E."/>
            <person name="Chan A."/>
            <person name="Chao Q."/>
            <person name="Chen H."/>
            <person name="Cheuk R.F."/>
            <person name="Chin C.W."/>
            <person name="Chung M.K."/>
            <person name="Conn L."/>
            <person name="Conway A.B."/>
            <person name="Conway A.R."/>
            <person name="Creasy T.H."/>
            <person name="Dewar K."/>
            <person name="Dunn P."/>
            <person name="Etgu P."/>
            <person name="Feldblyum T.V."/>
            <person name="Feng J.-D."/>
            <person name="Fong B."/>
            <person name="Fujii C.Y."/>
            <person name="Gill J.E."/>
            <person name="Goldsmith A.D."/>
            <person name="Haas B."/>
            <person name="Hansen N.F."/>
            <person name="Hughes B."/>
            <person name="Huizar L."/>
            <person name="Hunter J.L."/>
            <person name="Jenkins J."/>
            <person name="Johnson-Hopson C."/>
            <person name="Khan S."/>
            <person name="Khaykin E."/>
            <person name="Kim C.J."/>
            <person name="Koo H.L."/>
            <person name="Kremenetskaia I."/>
            <person name="Kurtz D.B."/>
            <person name="Kwan A."/>
            <person name="Lam B."/>
            <person name="Langin-Hooper S."/>
            <person name="Lee A."/>
            <person name="Lee J.M."/>
            <person name="Lenz C.A."/>
            <person name="Li J.H."/>
            <person name="Li Y.-P."/>
            <person name="Lin X."/>
            <person name="Liu S.X."/>
            <person name="Liu Z.A."/>
            <person name="Luros J.S."/>
            <person name="Maiti R."/>
            <person name="Marziali A."/>
            <person name="Militscher J."/>
            <person name="Miranda M."/>
            <person name="Nguyen M."/>
            <person name="Nierman W.C."/>
            <person name="Osborne B.I."/>
            <person name="Pai G."/>
            <person name="Peterson J."/>
            <person name="Pham P.K."/>
            <person name="Rizzo M."/>
            <person name="Rooney T."/>
            <person name="Rowley D."/>
            <person name="Sakano H."/>
            <person name="Salzberg S.L."/>
            <person name="Schwartz J.R."/>
            <person name="Shinn P."/>
            <person name="Southwick A.M."/>
            <person name="Sun H."/>
            <person name="Tallon L.J."/>
            <person name="Tambunga G."/>
            <person name="Toriumi M.J."/>
            <person name="Town C.D."/>
            <person name="Utterback T."/>
            <person name="Van Aken S."/>
            <person name="Vaysberg M."/>
            <person name="Vysotskaia V.S."/>
            <person name="Walker M."/>
            <person name="Wu D."/>
            <person name="Yu G."/>
            <person name="Fraser C.M."/>
            <person name="Venter J.C."/>
            <person name="Davis R.W."/>
        </authorList>
    </citation>
    <scope>NUCLEOTIDE SEQUENCE [LARGE SCALE GENOMIC DNA]</scope>
    <source>
        <strain>cv. Columbia</strain>
    </source>
</reference>
<reference key="2">
    <citation type="journal article" date="2017" name="Plant J.">
        <title>Araport11: a complete reannotation of the Arabidopsis thaliana reference genome.</title>
        <authorList>
            <person name="Cheng C.Y."/>
            <person name="Krishnakumar V."/>
            <person name="Chan A.P."/>
            <person name="Thibaud-Nissen F."/>
            <person name="Schobel S."/>
            <person name="Town C.D."/>
        </authorList>
    </citation>
    <scope>GENOME REANNOTATION</scope>
    <source>
        <strain>cv. Columbia</strain>
    </source>
</reference>
<reference key="3">
    <citation type="journal article" date="1998" name="Plant J.">
        <title>Towards functional characterisation of the members of the R2R3-MYB gene family from Arabidopsis thaliana.</title>
        <authorList>
            <person name="Kranz H.D."/>
            <person name="Denekamp M."/>
            <person name="Greco R."/>
            <person name="Jin H.-L."/>
            <person name="Leyva A."/>
            <person name="Meissner R.C."/>
            <person name="Petroni K."/>
            <person name="Urzainqui A."/>
            <person name="Bevan M."/>
            <person name="Martin C."/>
            <person name="Smeekens S."/>
            <person name="Tonelli C."/>
            <person name="Paz-Ares J."/>
            <person name="Weisshaar B."/>
        </authorList>
    </citation>
    <scope>NUCLEOTIDE SEQUENCE [MRNA] OF 74-296</scope>
    <scope>GENE FAMILY</scope>
    <scope>NOMENCLATURE</scope>
    <source>
        <strain>cv. Columbia</strain>
    </source>
</reference>
<reference key="4">
    <citation type="journal article" date="2001" name="Curr. Opin. Plant Biol.">
        <title>The R2R3-MYB gene family in Arabidopsis thaliana.</title>
        <authorList>
            <person name="Stracke R."/>
            <person name="Werber M."/>
            <person name="Weisshaar B."/>
        </authorList>
    </citation>
    <scope>GENE FAMILY</scope>
    <scope>NOMENCLATURE</scope>
    <source>
        <strain>cv. Columbia</strain>
    </source>
</reference>
<reference key="5">
    <citation type="journal article" date="2004" name="Plant Physiol.">
        <title>Cesium toxicity in Arabidopsis.</title>
        <authorList>
            <person name="Hampton C.R."/>
            <person name="Bowen H.C."/>
            <person name="Broadley M.R."/>
            <person name="Hammond J.P."/>
            <person name="Mead A."/>
            <person name="Payne K.A."/>
            <person name="Pritchard J."/>
            <person name="White P.J."/>
        </authorList>
    </citation>
    <scope>INDUCTION BY POTASSIUM STARVATION</scope>
</reference>
<reference key="6">
    <citation type="journal article" date="2008" name="Plant Cell Environ.">
        <title>Expression differences for genes involved in lignin, glutathione and sulphate metabolism in response to cadmium in Arabidopsis thaliana and the related Zn/Cd-hyperaccumulator Thlaspi caerulescens.</title>
        <authorList>
            <person name="van de Mortel J.E."/>
            <person name="Schat H."/>
            <person name="Moerland P.D."/>
            <person name="Ver Loren van Themaat E."/>
            <person name="van der Ent S."/>
            <person name="Blankestijn H."/>
            <person name="Ghandilyan A."/>
            <person name="Tsiatsiani S."/>
            <person name="Aarts M.G.M."/>
        </authorList>
    </citation>
    <scope>FUNCTION</scope>
    <scope>DISRUPTION PHENOTYPE</scope>
    <scope>INDUCTION BY ZINC AND CADMIUM</scope>
    <source>
        <strain>cv. Columbia</strain>
    </source>
</reference>
<reference key="7">
    <citation type="journal article" date="2008" name="Plant Physiol.">
        <title>MYB72 is required in early signaling steps of rhizobacteria-induced systemic resistance in Arabidopsis.</title>
        <authorList>
            <person name="Van der Ent S."/>
            <person name="Verhagen B.W.M."/>
            <person name="Van Doorn R."/>
            <person name="Bakker D."/>
            <person name="Verlaan M.G."/>
            <person name="Pel M.J.C."/>
            <person name="Joosten R.G."/>
            <person name="Proveniers M.C.G."/>
            <person name="Van Loon L.C."/>
            <person name="Ton J."/>
            <person name="Pieterse C.M.J."/>
        </authorList>
    </citation>
    <scope>FUNCTION</scope>
    <scope>DISRUPTION PHENOTYPE</scope>
    <scope>INDUCTION BY PSEUDOMONAS FLUORESCENS WCS417R</scope>
    <scope>INTERACTION WITH EIL3</scope>
    <source>
        <strain>cv. Columbia</strain>
    </source>
</reference>
<reference key="8">
    <citation type="journal article" date="2009" name="Plant Biol.">
        <title>MYB72, a node of convergence in induced systemic resistance triggered by a fungal and a bacterial beneficial microbe.</title>
        <authorList>
            <person name="Segarra G."/>
            <person name="Van der Ent S."/>
            <person name="Trillas I."/>
            <person name="Pieterse C.M.J."/>
        </authorList>
    </citation>
    <scope>FUNCTION</scope>
    <scope>DISRUPTION PHENOTYPE</scope>
    <source>
        <strain>cv. Columbia</strain>
    </source>
</reference>
<reference key="9">
    <citation type="journal article" date="2013" name="PLoS Genet.">
        <title>MYB10 and MYB72 are required for growth under iron-limiting conditions.</title>
        <authorList>
            <person name="Palmer C.M."/>
            <person name="Hindt M.N."/>
            <person name="Schmidt H."/>
            <person name="Clemens S."/>
            <person name="Guerinot M.L."/>
        </authorList>
    </citation>
    <scope>FUNCTION</scope>
    <scope>DISRUPTION PHENOTYPE</scope>
    <scope>INDUCTION BY IRON STARVATION</scope>
    <scope>SUBCELLULAR LOCATION</scope>
    <source>
        <strain>cv. Columbia</strain>
    </source>
</reference>
<reference key="10">
    <citation type="journal article" date="2014" name="New Phytol.">
        <title>beta-Glucosidase BGLU42 is a MYB72-dependent key regulator of rhizobacteria-induced systemic resistance and modulates iron deficiency responses in Arabidopsis roots.</title>
        <authorList>
            <person name="Zamioudis C."/>
            <person name="Hanson J."/>
            <person name="Pieterse C.M.J."/>
        </authorList>
    </citation>
    <scope>FUNCTION</scope>
    <scope>DISRUPTION PHENOTYPE</scope>
    <source>
        <strain>cv. Columbia</strain>
    </source>
</reference>
<organism>
    <name type="scientific">Arabidopsis thaliana</name>
    <name type="common">Mouse-ear cress</name>
    <dbReference type="NCBI Taxonomy" id="3702"/>
    <lineage>
        <taxon>Eukaryota</taxon>
        <taxon>Viridiplantae</taxon>
        <taxon>Streptophyta</taxon>
        <taxon>Embryophyta</taxon>
        <taxon>Tracheophyta</taxon>
        <taxon>Spermatophyta</taxon>
        <taxon>Magnoliopsida</taxon>
        <taxon>eudicotyledons</taxon>
        <taxon>Gunneridae</taxon>
        <taxon>Pentapetalae</taxon>
        <taxon>rosids</taxon>
        <taxon>malvids</taxon>
        <taxon>Brassicales</taxon>
        <taxon>Brassicaceae</taxon>
        <taxon>Camelineae</taxon>
        <taxon>Arabidopsis</taxon>
    </lineage>
</organism>
<evidence type="ECO:0000255" key="1">
    <source>
        <dbReference type="PROSITE-ProRule" id="PRU00625"/>
    </source>
</evidence>
<evidence type="ECO:0000256" key="2">
    <source>
        <dbReference type="SAM" id="MobiDB-lite"/>
    </source>
</evidence>
<evidence type="ECO:0000269" key="3">
    <source>
    </source>
</evidence>
<evidence type="ECO:0000269" key="4">
    <source>
    </source>
</evidence>
<evidence type="ECO:0000269" key="5">
    <source>
    </source>
</evidence>
<evidence type="ECO:0000269" key="6">
    <source>
    </source>
</evidence>
<evidence type="ECO:0000269" key="7">
    <source>
    </source>
</evidence>
<evidence type="ECO:0000269" key="8">
    <source>
    </source>
</evidence>
<evidence type="ECO:0000303" key="9">
    <source>
    </source>
</evidence>
<evidence type="ECO:0000305" key="10"/>
<evidence type="ECO:0000312" key="11">
    <source>
        <dbReference type="Araport" id="AT1G56160"/>
    </source>
</evidence>
<evidence type="ECO:0000312" key="12">
    <source>
        <dbReference type="EMBL" id="AAF02833.1"/>
    </source>
</evidence>
<evidence type="ECO:0000312" key="13">
    <source>
        <dbReference type="EMBL" id="AAG50903.1"/>
    </source>
</evidence>
<protein>
    <recommendedName>
        <fullName evidence="9">Transcription factor MYB72</fullName>
    </recommendedName>
    <alternativeName>
        <fullName evidence="9">Myb-related protein 72</fullName>
        <shortName evidence="9">AtMYB72</shortName>
    </alternativeName>
</protein>
<sequence length="296" mass="34107">MGKGRAPCCDKNKVKRGPWSPQEDLTLITFIQKHGHQNWRSLPKLAGLLRCGKSCRLRWINYLRPDVKRGNFSKKEEDAIIHYHQTLGNKWSKIASFLPGRTDNEIKNVWNTHLKKRLTPSSSSSSLSSTHDQSTKADHDKNCDGAQEEIHSGLNESQNSATSSHHQGECMHTKPELHEVNGLNEIQFLLDHDDFDDITSEFLQDNDILFPLDSLLHNHQTHISTQEMTREVTKSQSFDHPQPDIPCGFEDTNEESDLRRQLVESTTPNNEYDEWFNFIDNQTYFDDFNFVGEVCL</sequence>
<accession>Q9SGU3</accession>
<accession>Q9ZTC9</accession>